<protein>
    <recommendedName>
        <fullName evidence="1">Lysine--tRNA ligase</fullName>
        <ecNumber evidence="1">6.1.1.6</ecNumber>
    </recommendedName>
    <alternativeName>
        <fullName evidence="1">Lysyl-tRNA synthetase</fullName>
        <shortName evidence="1">LysRS</shortName>
    </alternativeName>
</protein>
<keyword id="KW-0030">Aminoacyl-tRNA synthetase</keyword>
<keyword id="KW-0067">ATP-binding</keyword>
<keyword id="KW-0963">Cytoplasm</keyword>
<keyword id="KW-0436">Ligase</keyword>
<keyword id="KW-0460">Magnesium</keyword>
<keyword id="KW-0479">Metal-binding</keyword>
<keyword id="KW-0547">Nucleotide-binding</keyword>
<keyword id="KW-0648">Protein biosynthesis</keyword>
<keyword id="KW-1185">Reference proteome</keyword>
<dbReference type="EC" id="6.1.1.6" evidence="1"/>
<dbReference type="EMBL" id="CP000725">
    <property type="protein sequence ID" value="ABV10963.1"/>
    <property type="molecule type" value="Genomic_DNA"/>
</dbReference>
<dbReference type="RefSeq" id="WP_012000217.1">
    <property type="nucleotide sequence ID" value="NC_009785.1"/>
</dbReference>
<dbReference type="SMR" id="A8AW92"/>
<dbReference type="STRING" id="467705.SGO_0753"/>
<dbReference type="KEGG" id="sgo:SGO_0753"/>
<dbReference type="eggNOG" id="COG1190">
    <property type="taxonomic scope" value="Bacteria"/>
</dbReference>
<dbReference type="HOGENOM" id="CLU_008255_6_0_9"/>
<dbReference type="Proteomes" id="UP000001131">
    <property type="component" value="Chromosome"/>
</dbReference>
<dbReference type="GO" id="GO:0005829">
    <property type="term" value="C:cytosol"/>
    <property type="evidence" value="ECO:0007669"/>
    <property type="project" value="TreeGrafter"/>
</dbReference>
<dbReference type="GO" id="GO:0005524">
    <property type="term" value="F:ATP binding"/>
    <property type="evidence" value="ECO:0007669"/>
    <property type="project" value="UniProtKB-UniRule"/>
</dbReference>
<dbReference type="GO" id="GO:0140096">
    <property type="term" value="F:catalytic activity, acting on a protein"/>
    <property type="evidence" value="ECO:0007669"/>
    <property type="project" value="UniProtKB-ARBA"/>
</dbReference>
<dbReference type="GO" id="GO:0004824">
    <property type="term" value="F:lysine-tRNA ligase activity"/>
    <property type="evidence" value="ECO:0007669"/>
    <property type="project" value="UniProtKB-UniRule"/>
</dbReference>
<dbReference type="GO" id="GO:0000287">
    <property type="term" value="F:magnesium ion binding"/>
    <property type="evidence" value="ECO:0007669"/>
    <property type="project" value="UniProtKB-UniRule"/>
</dbReference>
<dbReference type="GO" id="GO:0016740">
    <property type="term" value="F:transferase activity"/>
    <property type="evidence" value="ECO:0007669"/>
    <property type="project" value="UniProtKB-ARBA"/>
</dbReference>
<dbReference type="GO" id="GO:0000049">
    <property type="term" value="F:tRNA binding"/>
    <property type="evidence" value="ECO:0007669"/>
    <property type="project" value="TreeGrafter"/>
</dbReference>
<dbReference type="GO" id="GO:0006430">
    <property type="term" value="P:lysyl-tRNA aminoacylation"/>
    <property type="evidence" value="ECO:0007669"/>
    <property type="project" value="UniProtKB-UniRule"/>
</dbReference>
<dbReference type="CDD" id="cd00775">
    <property type="entry name" value="LysRS_core"/>
    <property type="match status" value="1"/>
</dbReference>
<dbReference type="CDD" id="cd04322">
    <property type="entry name" value="LysRS_N"/>
    <property type="match status" value="1"/>
</dbReference>
<dbReference type="FunFam" id="2.40.50.140:FF:000024">
    <property type="entry name" value="Lysine--tRNA ligase"/>
    <property type="match status" value="1"/>
</dbReference>
<dbReference type="FunFam" id="3.30.930.10:FF:000001">
    <property type="entry name" value="Lysine--tRNA ligase"/>
    <property type="match status" value="1"/>
</dbReference>
<dbReference type="Gene3D" id="3.30.930.10">
    <property type="entry name" value="Bira Bifunctional Protein, Domain 2"/>
    <property type="match status" value="1"/>
</dbReference>
<dbReference type="Gene3D" id="2.40.50.140">
    <property type="entry name" value="Nucleic acid-binding proteins"/>
    <property type="match status" value="1"/>
</dbReference>
<dbReference type="HAMAP" id="MF_00252">
    <property type="entry name" value="Lys_tRNA_synth_class2"/>
    <property type="match status" value="1"/>
</dbReference>
<dbReference type="InterPro" id="IPR004364">
    <property type="entry name" value="Aa-tRNA-synt_II"/>
</dbReference>
<dbReference type="InterPro" id="IPR006195">
    <property type="entry name" value="aa-tRNA-synth_II"/>
</dbReference>
<dbReference type="InterPro" id="IPR045864">
    <property type="entry name" value="aa-tRNA-synth_II/BPL/LPL"/>
</dbReference>
<dbReference type="InterPro" id="IPR002313">
    <property type="entry name" value="Lys-tRNA-ligase_II"/>
</dbReference>
<dbReference type="InterPro" id="IPR044136">
    <property type="entry name" value="Lys-tRNA-ligase_II_N"/>
</dbReference>
<dbReference type="InterPro" id="IPR018149">
    <property type="entry name" value="Lys-tRNA-synth_II_C"/>
</dbReference>
<dbReference type="InterPro" id="IPR012340">
    <property type="entry name" value="NA-bd_OB-fold"/>
</dbReference>
<dbReference type="InterPro" id="IPR004365">
    <property type="entry name" value="NA-bd_OB_tRNA"/>
</dbReference>
<dbReference type="NCBIfam" id="TIGR00499">
    <property type="entry name" value="lysS_bact"/>
    <property type="match status" value="1"/>
</dbReference>
<dbReference type="NCBIfam" id="NF001756">
    <property type="entry name" value="PRK00484.1"/>
    <property type="match status" value="1"/>
</dbReference>
<dbReference type="PANTHER" id="PTHR42918:SF15">
    <property type="entry name" value="LYSINE--TRNA LIGASE, CHLOROPLASTIC_MITOCHONDRIAL"/>
    <property type="match status" value="1"/>
</dbReference>
<dbReference type="PANTHER" id="PTHR42918">
    <property type="entry name" value="LYSYL-TRNA SYNTHETASE"/>
    <property type="match status" value="1"/>
</dbReference>
<dbReference type="Pfam" id="PF00152">
    <property type="entry name" value="tRNA-synt_2"/>
    <property type="match status" value="1"/>
</dbReference>
<dbReference type="Pfam" id="PF01336">
    <property type="entry name" value="tRNA_anti-codon"/>
    <property type="match status" value="1"/>
</dbReference>
<dbReference type="PRINTS" id="PR00982">
    <property type="entry name" value="TRNASYNTHLYS"/>
</dbReference>
<dbReference type="SUPFAM" id="SSF55681">
    <property type="entry name" value="Class II aaRS and biotin synthetases"/>
    <property type="match status" value="1"/>
</dbReference>
<dbReference type="SUPFAM" id="SSF50249">
    <property type="entry name" value="Nucleic acid-binding proteins"/>
    <property type="match status" value="1"/>
</dbReference>
<dbReference type="PROSITE" id="PS50862">
    <property type="entry name" value="AA_TRNA_LIGASE_II"/>
    <property type="match status" value="1"/>
</dbReference>
<name>SYK_STRGC</name>
<comment type="catalytic activity">
    <reaction evidence="1">
        <text>tRNA(Lys) + L-lysine + ATP = L-lysyl-tRNA(Lys) + AMP + diphosphate</text>
        <dbReference type="Rhea" id="RHEA:20792"/>
        <dbReference type="Rhea" id="RHEA-COMP:9696"/>
        <dbReference type="Rhea" id="RHEA-COMP:9697"/>
        <dbReference type="ChEBI" id="CHEBI:30616"/>
        <dbReference type="ChEBI" id="CHEBI:32551"/>
        <dbReference type="ChEBI" id="CHEBI:33019"/>
        <dbReference type="ChEBI" id="CHEBI:78442"/>
        <dbReference type="ChEBI" id="CHEBI:78529"/>
        <dbReference type="ChEBI" id="CHEBI:456215"/>
        <dbReference type="EC" id="6.1.1.6"/>
    </reaction>
</comment>
<comment type="cofactor">
    <cofactor evidence="1">
        <name>Mg(2+)</name>
        <dbReference type="ChEBI" id="CHEBI:18420"/>
    </cofactor>
    <text evidence="1">Binds 3 Mg(2+) ions per subunit.</text>
</comment>
<comment type="subunit">
    <text evidence="1">Homodimer.</text>
</comment>
<comment type="subcellular location">
    <subcellularLocation>
        <location evidence="1">Cytoplasm</location>
    </subcellularLocation>
</comment>
<comment type="similarity">
    <text evidence="1">Belongs to the class-II aminoacyl-tRNA synthetase family.</text>
</comment>
<gene>
    <name evidence="1" type="primary">lysS</name>
    <name type="ordered locus">SGO_0753</name>
</gene>
<accession>A8AW92</accession>
<proteinExistence type="inferred from homology"/>
<evidence type="ECO:0000255" key="1">
    <source>
        <dbReference type="HAMAP-Rule" id="MF_00252"/>
    </source>
</evidence>
<organism>
    <name type="scientific">Streptococcus gordonii (strain Challis / ATCC 35105 / BCRC 15272 / CH1 / DL1 / V288)</name>
    <dbReference type="NCBI Taxonomy" id="467705"/>
    <lineage>
        <taxon>Bacteria</taxon>
        <taxon>Bacillati</taxon>
        <taxon>Bacillota</taxon>
        <taxon>Bacilli</taxon>
        <taxon>Lactobacillales</taxon>
        <taxon>Streptococcaceae</taxon>
        <taxon>Streptococcus</taxon>
    </lineage>
</organism>
<reference key="1">
    <citation type="journal article" date="2007" name="J. Bacteriol.">
        <title>Genome-wide transcriptional changes in Streptococcus gordonii in response to competence signaling peptide.</title>
        <authorList>
            <person name="Vickerman M.M."/>
            <person name="Iobst S."/>
            <person name="Jesionowski A.M."/>
            <person name="Gill S.R."/>
        </authorList>
    </citation>
    <scope>NUCLEOTIDE SEQUENCE [LARGE SCALE GENOMIC DNA]</scope>
    <source>
        <strain>Challis / ATCC 35105 / BCRC 15272 / CH1 / DL1 / V288</strain>
    </source>
</reference>
<feature type="chain" id="PRO_1000078513" description="Lysine--tRNA ligase">
    <location>
        <begin position="1"/>
        <end position="496"/>
    </location>
</feature>
<feature type="binding site" evidence="1">
    <location>
        <position position="409"/>
    </location>
    <ligand>
        <name>Mg(2+)</name>
        <dbReference type="ChEBI" id="CHEBI:18420"/>
        <label>1</label>
    </ligand>
</feature>
<feature type="binding site" evidence="1">
    <location>
        <position position="416"/>
    </location>
    <ligand>
        <name>Mg(2+)</name>
        <dbReference type="ChEBI" id="CHEBI:18420"/>
        <label>1</label>
    </ligand>
</feature>
<feature type="binding site" evidence="1">
    <location>
        <position position="416"/>
    </location>
    <ligand>
        <name>Mg(2+)</name>
        <dbReference type="ChEBI" id="CHEBI:18420"/>
        <label>2</label>
    </ligand>
</feature>
<sequence length="496" mass="56434">MTTEHFEELNDQQIIRREKMAALAEQGIDPFGKRFERTANSGQLKEKYADKSKEELHDLADTATIAGRLMTKRGKGKVGFAHIQDREGQIQIYVRKDEVGEENYEIFKKADLGDFLGVEGEVMRTDMGELSIKATHITHLSKALRPLPEKFHGLTDVETIYRKRYLDLISNRESFNRFVTRSKIISEIRRYLDGQGFLEVETPVLHNEAGGAAARPFITHHNAQNIDMVLRIATELHLKRLIVGGMERVYEIGRIFRNEGMDATHNPEFTSIEVYQAYADFQDIMDLTEGIIQHAAISVCGDGPINYQGTEIKINEPFKRVHMVDAIKEITGVDFWQDMSFEEATALAKEKNVPLEKHFTEVGHVINAFFEEFVEETLTQPTFIYGHPVAVSPLAKKNPEDPRFTDRFELFIMTKEYANAFTELNDPIDQLSRFEAQAKAKELGDDEATGIDYDYVEALEYGMPPTGGLGIGIDRLVMLLTDVTTIRDVLLFPTMK</sequence>